<sequence length="67" mass="7648">MFFALCVALSGREVNKTRRTVNGVDHKDFFRDGKVGDWKNHLSVTLETENKIDMTIKEKFQGSGTQD</sequence>
<dbReference type="EC" id="2.8.2.-"/>
<dbReference type="EMBL" id="AL132980">
    <property type="protein sequence ID" value="CAB62643.1"/>
    <property type="molecule type" value="Genomic_DNA"/>
</dbReference>
<dbReference type="EMBL" id="CP002686">
    <property type="protein sequence ID" value="AEE78763.1"/>
    <property type="molecule type" value="Genomic_DNA"/>
</dbReference>
<dbReference type="PIR" id="T45752">
    <property type="entry name" value="T45752"/>
</dbReference>
<dbReference type="RefSeq" id="NP_190689.1">
    <property type="nucleotide sequence ID" value="NM_114980.1"/>
</dbReference>
<dbReference type="SMR" id="Q9SD25"/>
<dbReference type="STRING" id="3702.Q9SD25"/>
<dbReference type="PaxDb" id="3702-AT3G51210.1"/>
<dbReference type="EnsemblPlants" id="AT3G51210.1">
    <property type="protein sequence ID" value="AT3G51210.1"/>
    <property type="gene ID" value="AT3G51210"/>
</dbReference>
<dbReference type="GeneID" id="824284"/>
<dbReference type="Gramene" id="AT3G51210.1">
    <property type="protein sequence ID" value="AT3G51210.1"/>
    <property type="gene ID" value="AT3G51210"/>
</dbReference>
<dbReference type="KEGG" id="ath:AT3G51210"/>
<dbReference type="Araport" id="AT3G51210"/>
<dbReference type="TAIR" id="AT3G51210"/>
<dbReference type="eggNOG" id="KOG1584">
    <property type="taxonomic scope" value="Eukaryota"/>
</dbReference>
<dbReference type="HOGENOM" id="CLU_027239_6_5_1"/>
<dbReference type="InParanoid" id="Q9SD25"/>
<dbReference type="OMA" id="DHNSFFR"/>
<dbReference type="PhylomeDB" id="Q9SD25"/>
<dbReference type="Proteomes" id="UP000006548">
    <property type="component" value="Chromosome 3"/>
</dbReference>
<dbReference type="ExpressionAtlas" id="Q9SD25">
    <property type="expression patterns" value="baseline and differential"/>
</dbReference>
<dbReference type="GO" id="GO:0005737">
    <property type="term" value="C:cytoplasm"/>
    <property type="evidence" value="ECO:0007669"/>
    <property type="project" value="UniProtKB-SubCell"/>
</dbReference>
<dbReference type="GO" id="GO:0008146">
    <property type="term" value="F:sulfotransferase activity"/>
    <property type="evidence" value="ECO:0007669"/>
    <property type="project" value="InterPro"/>
</dbReference>
<dbReference type="Gene3D" id="3.40.50.300">
    <property type="entry name" value="P-loop containing nucleotide triphosphate hydrolases"/>
    <property type="match status" value="1"/>
</dbReference>
<dbReference type="InterPro" id="IPR027417">
    <property type="entry name" value="P-loop_NTPase"/>
</dbReference>
<dbReference type="InterPro" id="IPR000863">
    <property type="entry name" value="Sulfotransferase_dom"/>
</dbReference>
<dbReference type="Pfam" id="PF00685">
    <property type="entry name" value="Sulfotransfer_1"/>
    <property type="match status" value="1"/>
</dbReference>
<dbReference type="SUPFAM" id="SSF52540">
    <property type="entry name" value="P-loop containing nucleoside triphosphate hydrolases"/>
    <property type="match status" value="1"/>
</dbReference>
<accession>Q9SD25</accession>
<evidence type="ECO:0000250" key="1"/>
<evidence type="ECO:0000305" key="2"/>
<organism>
    <name type="scientific">Arabidopsis thaliana</name>
    <name type="common">Mouse-ear cress</name>
    <dbReference type="NCBI Taxonomy" id="3702"/>
    <lineage>
        <taxon>Eukaryota</taxon>
        <taxon>Viridiplantae</taxon>
        <taxon>Streptophyta</taxon>
        <taxon>Embryophyta</taxon>
        <taxon>Tracheophyta</taxon>
        <taxon>Spermatophyta</taxon>
        <taxon>Magnoliopsida</taxon>
        <taxon>eudicotyledons</taxon>
        <taxon>Gunneridae</taxon>
        <taxon>Pentapetalae</taxon>
        <taxon>rosids</taxon>
        <taxon>malvids</taxon>
        <taxon>Brassicales</taxon>
        <taxon>Brassicaceae</taxon>
        <taxon>Camelineae</taxon>
        <taxon>Arabidopsis</taxon>
    </lineage>
</organism>
<gene>
    <name type="primary">SOT2</name>
    <name type="ordered locus">At3g51210</name>
    <name type="ORF">F24M12.250</name>
</gene>
<reference key="1">
    <citation type="journal article" date="2000" name="Nature">
        <title>Sequence and analysis of chromosome 3 of the plant Arabidopsis thaliana.</title>
        <authorList>
            <person name="Salanoubat M."/>
            <person name="Lemcke K."/>
            <person name="Rieger M."/>
            <person name="Ansorge W."/>
            <person name="Unseld M."/>
            <person name="Fartmann B."/>
            <person name="Valle G."/>
            <person name="Bloecker H."/>
            <person name="Perez-Alonso M."/>
            <person name="Obermaier B."/>
            <person name="Delseny M."/>
            <person name="Boutry M."/>
            <person name="Grivell L.A."/>
            <person name="Mache R."/>
            <person name="Puigdomenech P."/>
            <person name="De Simone V."/>
            <person name="Choisne N."/>
            <person name="Artiguenave F."/>
            <person name="Robert C."/>
            <person name="Brottier P."/>
            <person name="Wincker P."/>
            <person name="Cattolico L."/>
            <person name="Weissenbach J."/>
            <person name="Saurin W."/>
            <person name="Quetier F."/>
            <person name="Schaefer M."/>
            <person name="Mueller-Auer S."/>
            <person name="Gabel C."/>
            <person name="Fuchs M."/>
            <person name="Benes V."/>
            <person name="Wurmbach E."/>
            <person name="Drzonek H."/>
            <person name="Erfle H."/>
            <person name="Jordan N."/>
            <person name="Bangert S."/>
            <person name="Wiedelmann R."/>
            <person name="Kranz H."/>
            <person name="Voss H."/>
            <person name="Holland R."/>
            <person name="Brandt P."/>
            <person name="Nyakatura G."/>
            <person name="Vezzi A."/>
            <person name="D'Angelo M."/>
            <person name="Pallavicini A."/>
            <person name="Toppo S."/>
            <person name="Simionati B."/>
            <person name="Conrad A."/>
            <person name="Hornischer K."/>
            <person name="Kauer G."/>
            <person name="Loehnert T.-H."/>
            <person name="Nordsiek G."/>
            <person name="Reichelt J."/>
            <person name="Scharfe M."/>
            <person name="Schoen O."/>
            <person name="Bargues M."/>
            <person name="Terol J."/>
            <person name="Climent J."/>
            <person name="Navarro P."/>
            <person name="Collado C."/>
            <person name="Perez-Perez A."/>
            <person name="Ottenwaelder B."/>
            <person name="Duchemin D."/>
            <person name="Cooke R."/>
            <person name="Laudie M."/>
            <person name="Berger-Llauro C."/>
            <person name="Purnelle B."/>
            <person name="Masuy D."/>
            <person name="de Haan M."/>
            <person name="Maarse A.C."/>
            <person name="Alcaraz J.-P."/>
            <person name="Cottet A."/>
            <person name="Casacuberta E."/>
            <person name="Monfort A."/>
            <person name="Argiriou A."/>
            <person name="Flores M."/>
            <person name="Liguori R."/>
            <person name="Vitale D."/>
            <person name="Mannhaupt G."/>
            <person name="Haase D."/>
            <person name="Schoof H."/>
            <person name="Rudd S."/>
            <person name="Zaccaria P."/>
            <person name="Mewes H.-W."/>
            <person name="Mayer K.F.X."/>
            <person name="Kaul S."/>
            <person name="Town C.D."/>
            <person name="Koo H.L."/>
            <person name="Tallon L.J."/>
            <person name="Jenkins J."/>
            <person name="Rooney T."/>
            <person name="Rizzo M."/>
            <person name="Walts A."/>
            <person name="Utterback T."/>
            <person name="Fujii C.Y."/>
            <person name="Shea T.P."/>
            <person name="Creasy T.H."/>
            <person name="Haas B."/>
            <person name="Maiti R."/>
            <person name="Wu D."/>
            <person name="Peterson J."/>
            <person name="Van Aken S."/>
            <person name="Pai G."/>
            <person name="Militscher J."/>
            <person name="Sellers P."/>
            <person name="Gill J.E."/>
            <person name="Feldblyum T.V."/>
            <person name="Preuss D."/>
            <person name="Lin X."/>
            <person name="Nierman W.C."/>
            <person name="Salzberg S.L."/>
            <person name="White O."/>
            <person name="Venter J.C."/>
            <person name="Fraser C.M."/>
            <person name="Kaneko T."/>
            <person name="Nakamura Y."/>
            <person name="Sato S."/>
            <person name="Kato T."/>
            <person name="Asamizu E."/>
            <person name="Sasamoto S."/>
            <person name="Kimura T."/>
            <person name="Idesawa K."/>
            <person name="Kawashima K."/>
            <person name="Kishida Y."/>
            <person name="Kiyokawa C."/>
            <person name="Kohara M."/>
            <person name="Matsumoto M."/>
            <person name="Matsuno A."/>
            <person name="Muraki A."/>
            <person name="Nakayama S."/>
            <person name="Nakazaki N."/>
            <person name="Shinpo S."/>
            <person name="Takeuchi C."/>
            <person name="Wada T."/>
            <person name="Watanabe A."/>
            <person name="Yamada M."/>
            <person name="Yasuda M."/>
            <person name="Tabata S."/>
        </authorList>
    </citation>
    <scope>NUCLEOTIDE SEQUENCE [LARGE SCALE GENOMIC DNA]</scope>
    <source>
        <strain>cv. Columbia</strain>
    </source>
</reference>
<reference key="2">
    <citation type="journal article" date="2017" name="Plant J.">
        <title>Araport11: a complete reannotation of the Arabidopsis thaliana reference genome.</title>
        <authorList>
            <person name="Cheng C.Y."/>
            <person name="Krishnakumar V."/>
            <person name="Chan A.P."/>
            <person name="Thibaud-Nissen F."/>
            <person name="Schobel S."/>
            <person name="Town C.D."/>
        </authorList>
    </citation>
    <scope>GENOME REANNOTATION</scope>
    <source>
        <strain>cv. Columbia</strain>
    </source>
</reference>
<reference key="3">
    <citation type="journal article" date="2004" name="J. Exp. Bot.">
        <title>The multi-protein family of Arabidopsis sulphotransferases and their relatives in other plant species.</title>
        <authorList>
            <person name="Klein M."/>
            <person name="Papenbrock J."/>
        </authorList>
    </citation>
    <scope>GENE FAMILY</scope>
    <scope>NOMENCLATURE</scope>
</reference>
<comment type="function">
    <text evidence="1">Sulfotransferase that utilizes 3'-phospho-5'-adenylyl sulfate (PAPS) as sulfonate donor.</text>
</comment>
<comment type="subcellular location">
    <subcellularLocation>
        <location evidence="1">Cytoplasm</location>
    </subcellularLocation>
</comment>
<comment type="similarity">
    <text evidence="2">Belongs to the sulfotransferase 1 family.</text>
</comment>
<comment type="caution">
    <text evidence="2">Could be the product of a pseudogene.</text>
</comment>
<name>SOT2_ARATH</name>
<protein>
    <recommendedName>
        <fullName>Putative cytosolic sulfotransferase 2</fullName>
        <shortName>AtSOT2</shortName>
        <ecNumber>2.8.2.-</ecNumber>
    </recommendedName>
</protein>
<feature type="chain" id="PRO_0000417050" description="Putative cytosolic sulfotransferase 2">
    <location>
        <begin position="1"/>
        <end position="67"/>
    </location>
</feature>
<feature type="binding site" evidence="1">
    <location>
        <begin position="31"/>
        <end position="33"/>
    </location>
    <ligand>
        <name>3'-phosphoadenylyl sulfate</name>
        <dbReference type="ChEBI" id="CHEBI:58339"/>
    </ligand>
</feature>
<keyword id="KW-0963">Cytoplasm</keyword>
<keyword id="KW-1185">Reference proteome</keyword>
<keyword id="KW-0808">Transferase</keyword>
<proteinExistence type="uncertain"/>